<reference key="1">
    <citation type="journal article" date="2002" name="Plant Biotechnol.">
        <title>Molecular cloning and characterization of a gene coding for a putative receptor-like protein kinase with a leucine-rich repeat expressed in inflorescence and root apices from Arabidopsis.</title>
        <authorList>
            <person name="Kanamoto H."/>
            <person name="Hattan J."/>
            <person name="Takemura M."/>
            <person name="Yokota A."/>
            <person name="Kouchi T."/>
        </authorList>
    </citation>
    <scope>NUCLEOTIDE SEQUENCE [GENOMIC DNA / MRNA]</scope>
    <scope>SUBCELLULAR LOCATION</scope>
    <scope>TISSUE SPECIFICITY</scope>
    <scope>AUTOPHOSPHORYLATION</scope>
    <scope>DISRUPTION PHENOTYPE</scope>
    <source>
        <strain>cv. Columbia</strain>
    </source>
</reference>
<reference key="2">
    <citation type="journal article" date="2000" name="Nature">
        <title>Sequence and analysis of chromosome 3 of the plant Arabidopsis thaliana.</title>
        <authorList>
            <person name="Salanoubat M."/>
            <person name="Lemcke K."/>
            <person name="Rieger M."/>
            <person name="Ansorge W."/>
            <person name="Unseld M."/>
            <person name="Fartmann B."/>
            <person name="Valle G."/>
            <person name="Bloecker H."/>
            <person name="Perez-Alonso M."/>
            <person name="Obermaier B."/>
            <person name="Delseny M."/>
            <person name="Boutry M."/>
            <person name="Grivell L.A."/>
            <person name="Mache R."/>
            <person name="Puigdomenech P."/>
            <person name="De Simone V."/>
            <person name="Choisne N."/>
            <person name="Artiguenave F."/>
            <person name="Robert C."/>
            <person name="Brottier P."/>
            <person name="Wincker P."/>
            <person name="Cattolico L."/>
            <person name="Weissenbach J."/>
            <person name="Saurin W."/>
            <person name="Quetier F."/>
            <person name="Schaefer M."/>
            <person name="Mueller-Auer S."/>
            <person name="Gabel C."/>
            <person name="Fuchs M."/>
            <person name="Benes V."/>
            <person name="Wurmbach E."/>
            <person name="Drzonek H."/>
            <person name="Erfle H."/>
            <person name="Jordan N."/>
            <person name="Bangert S."/>
            <person name="Wiedelmann R."/>
            <person name="Kranz H."/>
            <person name="Voss H."/>
            <person name="Holland R."/>
            <person name="Brandt P."/>
            <person name="Nyakatura G."/>
            <person name="Vezzi A."/>
            <person name="D'Angelo M."/>
            <person name="Pallavicini A."/>
            <person name="Toppo S."/>
            <person name="Simionati B."/>
            <person name="Conrad A."/>
            <person name="Hornischer K."/>
            <person name="Kauer G."/>
            <person name="Loehnert T.-H."/>
            <person name="Nordsiek G."/>
            <person name="Reichelt J."/>
            <person name="Scharfe M."/>
            <person name="Schoen O."/>
            <person name="Bargues M."/>
            <person name="Terol J."/>
            <person name="Climent J."/>
            <person name="Navarro P."/>
            <person name="Collado C."/>
            <person name="Perez-Perez A."/>
            <person name="Ottenwaelder B."/>
            <person name="Duchemin D."/>
            <person name="Cooke R."/>
            <person name="Laudie M."/>
            <person name="Berger-Llauro C."/>
            <person name="Purnelle B."/>
            <person name="Masuy D."/>
            <person name="de Haan M."/>
            <person name="Maarse A.C."/>
            <person name="Alcaraz J.-P."/>
            <person name="Cottet A."/>
            <person name="Casacuberta E."/>
            <person name="Monfort A."/>
            <person name="Argiriou A."/>
            <person name="Flores M."/>
            <person name="Liguori R."/>
            <person name="Vitale D."/>
            <person name="Mannhaupt G."/>
            <person name="Haase D."/>
            <person name="Schoof H."/>
            <person name="Rudd S."/>
            <person name="Zaccaria P."/>
            <person name="Mewes H.-W."/>
            <person name="Mayer K.F.X."/>
            <person name="Kaul S."/>
            <person name="Town C.D."/>
            <person name="Koo H.L."/>
            <person name="Tallon L.J."/>
            <person name="Jenkins J."/>
            <person name="Rooney T."/>
            <person name="Rizzo M."/>
            <person name="Walts A."/>
            <person name="Utterback T."/>
            <person name="Fujii C.Y."/>
            <person name="Shea T.P."/>
            <person name="Creasy T.H."/>
            <person name="Haas B."/>
            <person name="Maiti R."/>
            <person name="Wu D."/>
            <person name="Peterson J."/>
            <person name="Van Aken S."/>
            <person name="Pai G."/>
            <person name="Militscher J."/>
            <person name="Sellers P."/>
            <person name="Gill J.E."/>
            <person name="Feldblyum T.V."/>
            <person name="Preuss D."/>
            <person name="Lin X."/>
            <person name="Nierman W.C."/>
            <person name="Salzberg S.L."/>
            <person name="White O."/>
            <person name="Venter J.C."/>
            <person name="Fraser C.M."/>
            <person name="Kaneko T."/>
            <person name="Nakamura Y."/>
            <person name="Sato S."/>
            <person name="Kato T."/>
            <person name="Asamizu E."/>
            <person name="Sasamoto S."/>
            <person name="Kimura T."/>
            <person name="Idesawa K."/>
            <person name="Kawashima K."/>
            <person name="Kishida Y."/>
            <person name="Kiyokawa C."/>
            <person name="Kohara M."/>
            <person name="Matsumoto M."/>
            <person name="Matsuno A."/>
            <person name="Muraki A."/>
            <person name="Nakayama S."/>
            <person name="Nakazaki N."/>
            <person name="Shinpo S."/>
            <person name="Takeuchi C."/>
            <person name="Wada T."/>
            <person name="Watanabe A."/>
            <person name="Yamada M."/>
            <person name="Yasuda M."/>
            <person name="Tabata S."/>
        </authorList>
    </citation>
    <scope>NUCLEOTIDE SEQUENCE [LARGE SCALE GENOMIC DNA]</scope>
    <source>
        <strain>cv. Columbia</strain>
    </source>
</reference>
<reference key="3">
    <citation type="journal article" date="2017" name="Plant J.">
        <title>Araport11: a complete reannotation of the Arabidopsis thaliana reference genome.</title>
        <authorList>
            <person name="Cheng C.Y."/>
            <person name="Krishnakumar V."/>
            <person name="Chan A.P."/>
            <person name="Thibaud-Nissen F."/>
            <person name="Schobel S."/>
            <person name="Town C.D."/>
        </authorList>
    </citation>
    <scope>GENOME REANNOTATION</scope>
    <source>
        <strain>cv. Columbia</strain>
    </source>
</reference>
<reference key="4">
    <citation type="journal article" date="2003" name="Science">
        <title>Empirical analysis of transcriptional activity in the Arabidopsis genome.</title>
        <authorList>
            <person name="Yamada K."/>
            <person name="Lim J."/>
            <person name="Dale J.M."/>
            <person name="Chen H."/>
            <person name="Shinn P."/>
            <person name="Palm C.J."/>
            <person name="Southwick A.M."/>
            <person name="Wu H.C."/>
            <person name="Kim C.J."/>
            <person name="Nguyen M."/>
            <person name="Pham P.K."/>
            <person name="Cheuk R.F."/>
            <person name="Karlin-Newmann G."/>
            <person name="Liu S.X."/>
            <person name="Lam B."/>
            <person name="Sakano H."/>
            <person name="Wu T."/>
            <person name="Yu G."/>
            <person name="Miranda M."/>
            <person name="Quach H.L."/>
            <person name="Tripp M."/>
            <person name="Chang C.H."/>
            <person name="Lee J.M."/>
            <person name="Toriumi M.J."/>
            <person name="Chan M.M."/>
            <person name="Tang C.C."/>
            <person name="Onodera C.S."/>
            <person name="Deng J.M."/>
            <person name="Akiyama K."/>
            <person name="Ansari Y."/>
            <person name="Arakawa T."/>
            <person name="Banh J."/>
            <person name="Banno F."/>
            <person name="Bowser L."/>
            <person name="Brooks S.Y."/>
            <person name="Carninci P."/>
            <person name="Chao Q."/>
            <person name="Choy N."/>
            <person name="Enju A."/>
            <person name="Goldsmith A.D."/>
            <person name="Gurjal M."/>
            <person name="Hansen N.F."/>
            <person name="Hayashizaki Y."/>
            <person name="Johnson-Hopson C."/>
            <person name="Hsuan V.W."/>
            <person name="Iida K."/>
            <person name="Karnes M."/>
            <person name="Khan S."/>
            <person name="Koesema E."/>
            <person name="Ishida J."/>
            <person name="Jiang P.X."/>
            <person name="Jones T."/>
            <person name="Kawai J."/>
            <person name="Kamiya A."/>
            <person name="Meyers C."/>
            <person name="Nakajima M."/>
            <person name="Narusaka M."/>
            <person name="Seki M."/>
            <person name="Sakurai T."/>
            <person name="Satou M."/>
            <person name="Tamse R."/>
            <person name="Vaysberg M."/>
            <person name="Wallender E.K."/>
            <person name="Wong C."/>
            <person name="Yamamura Y."/>
            <person name="Yuan S."/>
            <person name="Shinozaki K."/>
            <person name="Davis R.W."/>
            <person name="Theologis A."/>
            <person name="Ecker J.R."/>
        </authorList>
    </citation>
    <scope>NUCLEOTIDE SEQUENCE [LARGE SCALE MRNA]</scope>
    <source>
        <strain>cv. Columbia</strain>
    </source>
</reference>
<reference key="5">
    <citation type="journal article" date="2010" name="BMC Genomics">
        <title>Genome-wide cloning and sequence analysis of leucine-rich repeat receptor-like protein kinase genes in Arabidopsis thaliana.</title>
        <authorList>
            <person name="Gou X."/>
            <person name="He K."/>
            <person name="Yang H."/>
            <person name="Yuan T."/>
            <person name="Lin H."/>
            <person name="Clouse S.D."/>
            <person name="Li J."/>
        </authorList>
    </citation>
    <scope>NUCLEOTIDE SEQUENCE [LARGE SCALE MRNA]</scope>
    <source>
        <strain>cv. Columbia</strain>
    </source>
</reference>
<reference key="6">
    <citation type="journal article" date="2004" name="Biosci. Biotechnol. Biochem.">
        <title>Molecular characterization of the cytoplasmic interacting protein of the receptor kinase IRK expressed in the inflorescence and root apices of Arabidopsis.</title>
        <authorList>
            <person name="Hattan J."/>
            <person name="Kanamoto H."/>
            <person name="Takemura M."/>
            <person name="Yokota A."/>
            <person name="Kohchi T."/>
        </authorList>
    </citation>
    <scope>INTERACTION WITH IRKI</scope>
</reference>
<evidence type="ECO:0000255" key="1"/>
<evidence type="ECO:0000255" key="2">
    <source>
        <dbReference type="PROSITE-ProRule" id="PRU00159"/>
    </source>
</evidence>
<evidence type="ECO:0000255" key="3">
    <source>
        <dbReference type="PROSITE-ProRule" id="PRU00498"/>
    </source>
</evidence>
<evidence type="ECO:0000269" key="4">
    <source>
    </source>
</evidence>
<evidence type="ECO:0000269" key="5">
    <source ref="1"/>
</evidence>
<evidence type="ECO:0000303" key="6">
    <source ref="1"/>
</evidence>
<evidence type="ECO:0000305" key="7"/>
<evidence type="ECO:0000312" key="8">
    <source>
        <dbReference type="Araport" id="AT3G56370"/>
    </source>
</evidence>
<evidence type="ECO:0000312" key="9">
    <source>
        <dbReference type="EMBL" id="CAB88040.1"/>
    </source>
</evidence>
<organism>
    <name type="scientific">Arabidopsis thaliana</name>
    <name type="common">Mouse-ear cress</name>
    <dbReference type="NCBI Taxonomy" id="3702"/>
    <lineage>
        <taxon>Eukaryota</taxon>
        <taxon>Viridiplantae</taxon>
        <taxon>Streptophyta</taxon>
        <taxon>Embryophyta</taxon>
        <taxon>Tracheophyta</taxon>
        <taxon>Spermatophyta</taxon>
        <taxon>Magnoliopsida</taxon>
        <taxon>eudicotyledons</taxon>
        <taxon>Gunneridae</taxon>
        <taxon>Pentapetalae</taxon>
        <taxon>rosids</taxon>
        <taxon>malvids</taxon>
        <taxon>Brassicales</taxon>
        <taxon>Brassicaceae</taxon>
        <taxon>Camelineae</taxon>
        <taxon>Arabidopsis</taxon>
    </lineage>
</organism>
<dbReference type="EC" id="2.7.11.1" evidence="7"/>
<dbReference type="EMBL" id="AB076906">
    <property type="protein sequence ID" value="BAB85646.1"/>
    <property type="molecule type" value="mRNA"/>
</dbReference>
<dbReference type="EMBL" id="AB076907">
    <property type="protein sequence ID" value="BAB85647.1"/>
    <property type="molecule type" value="Genomic_DNA"/>
</dbReference>
<dbReference type="EMBL" id="AL163972">
    <property type="protein sequence ID" value="CAB88040.1"/>
    <property type="molecule type" value="Genomic_DNA"/>
</dbReference>
<dbReference type="EMBL" id="CP002686">
    <property type="protein sequence ID" value="AEE79514.1"/>
    <property type="molecule type" value="Genomic_DNA"/>
</dbReference>
<dbReference type="EMBL" id="AY070033">
    <property type="protein sequence ID" value="AAL49790.1"/>
    <property type="molecule type" value="mRNA"/>
</dbReference>
<dbReference type="EMBL" id="FJ708741">
    <property type="protein sequence ID" value="ACN59335.1"/>
    <property type="molecule type" value="mRNA"/>
</dbReference>
<dbReference type="PIR" id="T49038">
    <property type="entry name" value="T49038"/>
</dbReference>
<dbReference type="RefSeq" id="NP_191196.1">
    <property type="nucleotide sequence ID" value="NM_115495.4"/>
</dbReference>
<dbReference type="SMR" id="Q9LY03"/>
<dbReference type="FunCoup" id="Q9LY03">
    <property type="interactions" value="814"/>
</dbReference>
<dbReference type="IntAct" id="Q9LY03">
    <property type="interactions" value="30"/>
</dbReference>
<dbReference type="STRING" id="3702.Q9LY03"/>
<dbReference type="TCDB" id="1.A.87.2.19">
    <property type="family name" value="the mechanosensitive calcium channel (mca) family"/>
</dbReference>
<dbReference type="GlyCosmos" id="Q9LY03">
    <property type="glycosylation" value="8 sites, No reported glycans"/>
</dbReference>
<dbReference type="GlyGen" id="Q9LY03">
    <property type="glycosylation" value="8 sites"/>
</dbReference>
<dbReference type="iPTMnet" id="Q9LY03"/>
<dbReference type="PaxDb" id="3702-AT3G56370.1"/>
<dbReference type="ProteomicsDB" id="247045"/>
<dbReference type="EnsemblPlants" id="AT3G56370.1">
    <property type="protein sequence ID" value="AT3G56370.1"/>
    <property type="gene ID" value="AT3G56370"/>
</dbReference>
<dbReference type="GeneID" id="824804"/>
<dbReference type="Gramene" id="AT3G56370.1">
    <property type="protein sequence ID" value="AT3G56370.1"/>
    <property type="gene ID" value="AT3G56370"/>
</dbReference>
<dbReference type="KEGG" id="ath:AT3G56370"/>
<dbReference type="Araport" id="AT3G56370"/>
<dbReference type="TAIR" id="AT3G56370">
    <property type="gene designation" value="IRK"/>
</dbReference>
<dbReference type="eggNOG" id="ENOG502QU7G">
    <property type="taxonomic scope" value="Eukaryota"/>
</dbReference>
<dbReference type="HOGENOM" id="CLU_000288_22_1_1"/>
<dbReference type="InParanoid" id="Q9LY03"/>
<dbReference type="OMA" id="WNDRFNI"/>
<dbReference type="PhylomeDB" id="Q9LY03"/>
<dbReference type="PRO" id="PR:Q9LY03"/>
<dbReference type="Proteomes" id="UP000006548">
    <property type="component" value="Chromosome 3"/>
</dbReference>
<dbReference type="ExpressionAtlas" id="Q9LY03">
    <property type="expression patterns" value="baseline and differential"/>
</dbReference>
<dbReference type="GO" id="GO:0005886">
    <property type="term" value="C:plasma membrane"/>
    <property type="evidence" value="ECO:0000314"/>
    <property type="project" value="UniProtKB"/>
</dbReference>
<dbReference type="GO" id="GO:0005524">
    <property type="term" value="F:ATP binding"/>
    <property type="evidence" value="ECO:0007669"/>
    <property type="project" value="UniProtKB-KW"/>
</dbReference>
<dbReference type="GO" id="GO:0106310">
    <property type="term" value="F:protein serine kinase activity"/>
    <property type="evidence" value="ECO:0007669"/>
    <property type="project" value="RHEA"/>
</dbReference>
<dbReference type="GO" id="GO:0004674">
    <property type="term" value="F:protein serine/threonine kinase activity"/>
    <property type="evidence" value="ECO:0007669"/>
    <property type="project" value="UniProtKB-EC"/>
</dbReference>
<dbReference type="GO" id="GO:0051302">
    <property type="term" value="P:regulation of cell division"/>
    <property type="evidence" value="ECO:0000315"/>
    <property type="project" value="TAIR"/>
</dbReference>
<dbReference type="GO" id="GO:0048364">
    <property type="term" value="P:root development"/>
    <property type="evidence" value="ECO:0000315"/>
    <property type="project" value="TAIR"/>
</dbReference>
<dbReference type="CDD" id="cd14066">
    <property type="entry name" value="STKc_IRAK"/>
    <property type="match status" value="1"/>
</dbReference>
<dbReference type="FunFam" id="3.80.10.10:FF:000413">
    <property type="entry name" value="Inactive leucine-rich repeat receptor-like protein kinase"/>
    <property type="match status" value="1"/>
</dbReference>
<dbReference type="FunFam" id="3.80.10.10:FF:000275">
    <property type="entry name" value="Leucine-rich repeat receptor-like protein kinase"/>
    <property type="match status" value="1"/>
</dbReference>
<dbReference type="FunFam" id="1.10.510.10:FF:000267">
    <property type="entry name" value="probable LRR receptor-like serine/threonine-protein kinase IRK"/>
    <property type="match status" value="1"/>
</dbReference>
<dbReference type="FunFam" id="3.30.200.20:FF:000295">
    <property type="entry name" value="probable LRR receptor-like serine/threonine-protein kinase IRK"/>
    <property type="match status" value="1"/>
</dbReference>
<dbReference type="FunFam" id="3.80.10.10:FF:000402">
    <property type="entry name" value="Putative LRR receptor-like serine/threonine-protein kinase IRK"/>
    <property type="match status" value="1"/>
</dbReference>
<dbReference type="Gene3D" id="3.30.200.20">
    <property type="entry name" value="Phosphorylase Kinase, domain 1"/>
    <property type="match status" value="1"/>
</dbReference>
<dbReference type="Gene3D" id="3.80.10.10">
    <property type="entry name" value="Ribonuclease Inhibitor"/>
    <property type="match status" value="5"/>
</dbReference>
<dbReference type="Gene3D" id="1.10.510.10">
    <property type="entry name" value="Transferase(Phosphotransferase) domain 1"/>
    <property type="match status" value="1"/>
</dbReference>
<dbReference type="InterPro" id="IPR050994">
    <property type="entry name" value="At_inactive_RLKs"/>
</dbReference>
<dbReference type="InterPro" id="IPR011009">
    <property type="entry name" value="Kinase-like_dom_sf"/>
</dbReference>
<dbReference type="InterPro" id="IPR001611">
    <property type="entry name" value="Leu-rich_rpt"/>
</dbReference>
<dbReference type="InterPro" id="IPR003591">
    <property type="entry name" value="Leu-rich_rpt_typical-subtyp"/>
</dbReference>
<dbReference type="InterPro" id="IPR032675">
    <property type="entry name" value="LRR_dom_sf"/>
</dbReference>
<dbReference type="InterPro" id="IPR013210">
    <property type="entry name" value="LRR_N_plant-typ"/>
</dbReference>
<dbReference type="InterPro" id="IPR055414">
    <property type="entry name" value="LRR_R13L4/SHOC2-like"/>
</dbReference>
<dbReference type="InterPro" id="IPR000719">
    <property type="entry name" value="Prot_kinase_dom"/>
</dbReference>
<dbReference type="InterPro" id="IPR017441">
    <property type="entry name" value="Protein_kinase_ATP_BS"/>
</dbReference>
<dbReference type="InterPro" id="IPR001245">
    <property type="entry name" value="Ser-Thr/Tyr_kinase_cat_dom"/>
</dbReference>
<dbReference type="PANTHER" id="PTHR48010">
    <property type="entry name" value="OS05G0588300 PROTEIN"/>
    <property type="match status" value="1"/>
</dbReference>
<dbReference type="PANTHER" id="PTHR48010:SF58">
    <property type="entry name" value="RECEPTOR PROTEIN KINASE-LIKE PROTEIN ZAR1"/>
    <property type="match status" value="1"/>
</dbReference>
<dbReference type="Pfam" id="PF00560">
    <property type="entry name" value="LRR_1"/>
    <property type="match status" value="2"/>
</dbReference>
<dbReference type="Pfam" id="PF23598">
    <property type="entry name" value="LRR_14"/>
    <property type="match status" value="2"/>
</dbReference>
<dbReference type="Pfam" id="PF13855">
    <property type="entry name" value="LRR_8"/>
    <property type="match status" value="1"/>
</dbReference>
<dbReference type="Pfam" id="PF08263">
    <property type="entry name" value="LRRNT_2"/>
    <property type="match status" value="1"/>
</dbReference>
<dbReference type="Pfam" id="PF07714">
    <property type="entry name" value="PK_Tyr_Ser-Thr"/>
    <property type="match status" value="1"/>
</dbReference>
<dbReference type="PRINTS" id="PR00019">
    <property type="entry name" value="LEURICHRPT"/>
</dbReference>
<dbReference type="SMART" id="SM00369">
    <property type="entry name" value="LRR_TYP"/>
    <property type="match status" value="6"/>
</dbReference>
<dbReference type="SUPFAM" id="SSF52058">
    <property type="entry name" value="L domain-like"/>
    <property type="match status" value="2"/>
</dbReference>
<dbReference type="SUPFAM" id="SSF56112">
    <property type="entry name" value="Protein kinase-like (PK-like)"/>
    <property type="match status" value="1"/>
</dbReference>
<dbReference type="PROSITE" id="PS51450">
    <property type="entry name" value="LRR"/>
    <property type="match status" value="16"/>
</dbReference>
<dbReference type="PROSITE" id="PS00107">
    <property type="entry name" value="PROTEIN_KINASE_ATP"/>
    <property type="match status" value="1"/>
</dbReference>
<dbReference type="PROSITE" id="PS50011">
    <property type="entry name" value="PROTEIN_KINASE_DOM"/>
    <property type="match status" value="1"/>
</dbReference>
<gene>
    <name evidence="6" type="primary">IRK</name>
    <name evidence="8" type="ordered locus">At3g56370</name>
    <name evidence="9" type="ORF">T5P19.20</name>
</gene>
<keyword id="KW-0067">ATP-binding</keyword>
<keyword id="KW-1003">Cell membrane</keyword>
<keyword id="KW-0325">Glycoprotein</keyword>
<keyword id="KW-0418">Kinase</keyword>
<keyword id="KW-0433">Leucine-rich repeat</keyword>
<keyword id="KW-0472">Membrane</keyword>
<keyword id="KW-0547">Nucleotide-binding</keyword>
<keyword id="KW-0675">Receptor</keyword>
<keyword id="KW-1185">Reference proteome</keyword>
<keyword id="KW-0677">Repeat</keyword>
<keyword id="KW-0732">Signal</keyword>
<keyword id="KW-0808">Transferase</keyword>
<keyword id="KW-0812">Transmembrane</keyword>
<keyword id="KW-1133">Transmembrane helix</keyword>
<name>IRK_ARATH</name>
<proteinExistence type="evidence at protein level"/>
<feature type="signal peptide" evidence="1">
    <location>
        <begin position="1"/>
        <end position="20"/>
    </location>
</feature>
<feature type="chain" id="PRO_0000433166" description="Probable LRR receptor-like serine/threonine-protein kinase IRK" evidence="1">
    <location>
        <begin position="21"/>
        <end position="964"/>
    </location>
</feature>
<feature type="topological domain" description="Extracellular" evidence="7">
    <location>
        <begin position="21"/>
        <end position="603"/>
    </location>
</feature>
<feature type="transmembrane region" description="Helical" evidence="1">
    <location>
        <begin position="604"/>
        <end position="624"/>
    </location>
</feature>
<feature type="topological domain" description="Cytoplasmic" evidence="7">
    <location>
        <begin position="625"/>
        <end position="964"/>
    </location>
</feature>
<feature type="repeat" description="LRR 1" evidence="1">
    <location>
        <begin position="92"/>
        <end position="116"/>
    </location>
</feature>
<feature type="repeat" description="LRR 2" evidence="1">
    <location>
        <begin position="117"/>
        <end position="141"/>
    </location>
</feature>
<feature type="repeat" description="LRR 3" evidence="1">
    <location>
        <begin position="143"/>
        <end position="166"/>
    </location>
</feature>
<feature type="repeat" description="LRR 4" evidence="1">
    <location>
        <begin position="168"/>
        <end position="190"/>
    </location>
</feature>
<feature type="repeat" description="LRR 5" evidence="1">
    <location>
        <begin position="191"/>
        <end position="214"/>
    </location>
</feature>
<feature type="repeat" description="LRR 6" evidence="1">
    <location>
        <begin position="215"/>
        <end position="238"/>
    </location>
</feature>
<feature type="repeat" description="LRR 7" evidence="1">
    <location>
        <begin position="240"/>
        <end position="261"/>
    </location>
</feature>
<feature type="repeat" description="LRR 8" evidence="1">
    <location>
        <begin position="263"/>
        <end position="286"/>
    </location>
</feature>
<feature type="repeat" description="LRR 9" evidence="1">
    <location>
        <begin position="287"/>
        <end position="310"/>
    </location>
</feature>
<feature type="repeat" description="LRR 10" evidence="1">
    <location>
        <begin position="312"/>
        <end position="334"/>
    </location>
</feature>
<feature type="repeat" description="LRR 11" evidence="1">
    <location>
        <begin position="335"/>
        <end position="358"/>
    </location>
</feature>
<feature type="repeat" description="LRR 12" evidence="1">
    <location>
        <begin position="375"/>
        <end position="399"/>
    </location>
</feature>
<feature type="repeat" description="LRR 13" evidence="1">
    <location>
        <begin position="400"/>
        <end position="423"/>
    </location>
</feature>
<feature type="repeat" description="LRR 14" evidence="1">
    <location>
        <begin position="425"/>
        <end position="447"/>
    </location>
</feature>
<feature type="repeat" description="LRR 15" evidence="1">
    <location>
        <begin position="448"/>
        <end position="471"/>
    </location>
</feature>
<feature type="repeat" description="LRR 16" evidence="1">
    <location>
        <begin position="472"/>
        <end position="495"/>
    </location>
</feature>
<feature type="repeat" description="LRR 17" evidence="1">
    <location>
        <begin position="496"/>
        <end position="519"/>
    </location>
</feature>
<feature type="repeat" description="LRR 18" evidence="1">
    <location>
        <begin position="521"/>
        <end position="544"/>
    </location>
</feature>
<feature type="domain" description="Protein kinase" evidence="2">
    <location>
        <begin position="678"/>
        <end position="951"/>
    </location>
</feature>
<feature type="binding site" evidence="2">
    <location>
        <begin position="684"/>
        <end position="692"/>
    </location>
    <ligand>
        <name>ATP</name>
        <dbReference type="ChEBI" id="CHEBI:30616"/>
    </ligand>
</feature>
<feature type="binding site" evidence="2">
    <location>
        <position position="706"/>
    </location>
    <ligand>
        <name>ATP</name>
        <dbReference type="ChEBI" id="CHEBI:30616"/>
    </ligand>
</feature>
<feature type="glycosylation site" description="N-linked (GlcNAc...) asparagine" evidence="3">
    <location>
        <position position="104"/>
    </location>
</feature>
<feature type="glycosylation site" description="N-linked (GlcNAc...) asparagine" evidence="3">
    <location>
        <position position="173"/>
    </location>
</feature>
<feature type="glycosylation site" description="N-linked (GlcNAc...) asparagine" evidence="3">
    <location>
        <position position="317"/>
    </location>
</feature>
<feature type="glycosylation site" description="N-linked (GlcNAc...) asparagine" evidence="3">
    <location>
        <position position="370"/>
    </location>
</feature>
<feature type="glycosylation site" description="N-linked (GlcNAc...) asparagine" evidence="3">
    <location>
        <position position="470"/>
    </location>
</feature>
<feature type="glycosylation site" description="N-linked (GlcNAc...) asparagine" evidence="3">
    <location>
        <position position="526"/>
    </location>
</feature>
<feature type="glycosylation site" description="N-linked (GlcNAc...) asparagine" evidence="3">
    <location>
        <position position="562"/>
    </location>
</feature>
<feature type="glycosylation site" description="N-linked (GlcNAc...) asparagine" evidence="3">
    <location>
        <position position="578"/>
    </location>
</feature>
<feature type="sequence conflict" description="In Ref. 4; AAL49790." evidence="7" ref="4">
    <original>D</original>
    <variation>G</variation>
    <location>
        <position position="27"/>
    </location>
</feature>
<comment type="catalytic activity">
    <reaction evidence="7">
        <text>L-seryl-[protein] + ATP = O-phospho-L-seryl-[protein] + ADP + H(+)</text>
        <dbReference type="Rhea" id="RHEA:17989"/>
        <dbReference type="Rhea" id="RHEA-COMP:9863"/>
        <dbReference type="Rhea" id="RHEA-COMP:11604"/>
        <dbReference type="ChEBI" id="CHEBI:15378"/>
        <dbReference type="ChEBI" id="CHEBI:29999"/>
        <dbReference type="ChEBI" id="CHEBI:30616"/>
        <dbReference type="ChEBI" id="CHEBI:83421"/>
        <dbReference type="ChEBI" id="CHEBI:456216"/>
        <dbReference type="EC" id="2.7.11.1"/>
    </reaction>
</comment>
<comment type="catalytic activity">
    <reaction evidence="7">
        <text>L-threonyl-[protein] + ATP = O-phospho-L-threonyl-[protein] + ADP + H(+)</text>
        <dbReference type="Rhea" id="RHEA:46608"/>
        <dbReference type="Rhea" id="RHEA-COMP:11060"/>
        <dbReference type="Rhea" id="RHEA-COMP:11605"/>
        <dbReference type="ChEBI" id="CHEBI:15378"/>
        <dbReference type="ChEBI" id="CHEBI:30013"/>
        <dbReference type="ChEBI" id="CHEBI:30616"/>
        <dbReference type="ChEBI" id="CHEBI:61977"/>
        <dbReference type="ChEBI" id="CHEBI:456216"/>
        <dbReference type="EC" id="2.7.11.1"/>
    </reaction>
</comment>
<comment type="subunit">
    <text evidence="4">Interacts with IRKI.</text>
</comment>
<comment type="interaction">
    <interactant intactId="EBI-1392485">
        <id>Q9LY03</id>
    </interactant>
    <interactant intactId="EBI-16934827">
        <id>Q8W4S5</id>
        <label>At5g63710</label>
    </interactant>
    <organismsDiffer>false</organismsDiffer>
    <experiments>2</experiments>
</comment>
<comment type="interaction">
    <interactant intactId="EBI-1392485">
        <id>Q9LY03</id>
    </interactant>
    <interactant intactId="EBI-1392508">
        <id>Q9LXU9</id>
        <label>IRKI</label>
    </interactant>
    <organismsDiffer>false</organismsDiffer>
    <experiments>2</experiments>
</comment>
<comment type="subcellular location">
    <subcellularLocation>
        <location evidence="5">Cell membrane</location>
        <topology evidence="1">Single-pass type I membrane protein</topology>
    </subcellularLocation>
</comment>
<comment type="tissue specificity">
    <text evidence="5">Highly expressed in root tips, shoot apices and developing flowers.</text>
</comment>
<comment type="PTM">
    <text evidence="5">Autophosphorylated.</text>
</comment>
<comment type="disruption phenotype">
    <text evidence="5">No visible phenotype under normal growth conditions.</text>
</comment>
<comment type="similarity">
    <text evidence="2">Belongs to the protein kinase superfamily. Ser/Thr protein kinase family.</text>
</comment>
<accession>Q9LY03</accession>
<accession>Q8VYT7</accession>
<sequence>MYKALIFTVLLVSAVAPVRSLDPPLNDDVLGLIVFKADLRDPEQKLASWNEDDYTPCSWNGVKCHPRTNRVTELNLDGFSLSGRIGRGLLQLQFLHKLSLSNNNLTGIINPNMLLSLVNLKVVDLSSNGLSGSLPDEFFRQCGSLRVLSLAKNKLTGKIPVSISSCSSLAALNLSSNGFSGSMPLGIWSLNTLRSLDLSRNELEGEFPEKIDRLNNLRALDLSRNRLSGPIPSEIGSCMLLKTIDLSENSLSGSLPNTFQQLSLCYSLNLGKNALEGEVPKWIGEMRSLETLDLSMNKFSGQVPDSIGNLLALKVLNFSGNGLIGSLPVSTANCINLLALDLSGNSLTGKLPMWLFQDGSRDVSALKNDNSTGGIKKIQVLDLSHNAFSGEIGAGLGDLRDLEGLHLSRNSLTGPIPSTIGELKHLSVLDVSHNQLNGMIPRETGGAVSLEELRLENNLLEGNIPSSIKNCSSLRSLILSHNKLLGSIPPELAKLTRLEEVDLSFNELAGTLPKQLANLGYLHTFNISHNHLFGELPAGGIFNGLSPSSVSGNPGICGAVVNKSCPAISPKPIVLNPNATFDPYNGEIVPPGAGHKRILLSISSLIAISAAAAIVVGVIAITVLNLRVRASTVSRSAVPLTFSGGDDFSRSPTTDSNSGKLVMFSGEPDFSTGTHALLNKDCELGRGGFGAVYRTVIRDGYPVAIKKLTVSSLVKSQDEFEREVKKLGKLRHSNLVKLEGYYWTTSLQLLIYEFLSGGSLYKQLHEAPGGNSSLSWNDRFNIILGTAKCLAYLHQSNIIHYNIKSSNVLLDSSGEPKVGDYGLARLLPMLDRYVLSSKIQSALGYMAPEFACRTVKITEKCDVYGFGVLVLEVVTGKKPVEYMEDDVVVLCDMVREALEDGRADECIDPRLQGKFPVEEAVAVIKLGLICTSQVPSSRPHMGEAVNILRMIRCPSGSSDELGSS</sequence>
<protein>
    <recommendedName>
        <fullName evidence="7">Probable LRR receptor-like serine/threonine-protein kinase IRK</fullName>
        <ecNumber evidence="7">2.7.11.1</ecNumber>
    </recommendedName>
    <alternativeName>
        <fullName evidence="6">Inflorescence and root apices receptor-like kinase</fullName>
    </alternativeName>
</protein>